<evidence type="ECO:0000255" key="1">
    <source>
        <dbReference type="HAMAP-Rule" id="MF_00457"/>
    </source>
</evidence>
<dbReference type="EMBL" id="CP000390">
    <property type="protein sequence ID" value="ABG62758.1"/>
    <property type="molecule type" value="Genomic_DNA"/>
</dbReference>
<dbReference type="SMR" id="Q11IL7"/>
<dbReference type="STRING" id="266779.Meso_1362"/>
<dbReference type="KEGG" id="mes:Meso_1362"/>
<dbReference type="eggNOG" id="COG2220">
    <property type="taxonomic scope" value="Bacteria"/>
</dbReference>
<dbReference type="HOGENOM" id="CLU_070010_4_0_5"/>
<dbReference type="OrthoDB" id="9789133at2"/>
<dbReference type="GO" id="GO:0016787">
    <property type="term" value="F:hydrolase activity"/>
    <property type="evidence" value="ECO:0007669"/>
    <property type="project" value="UniProtKB-UniRule"/>
</dbReference>
<dbReference type="Gene3D" id="3.60.15.10">
    <property type="entry name" value="Ribonuclease Z/Hydroxyacylglutathione hydrolase-like"/>
    <property type="match status" value="1"/>
</dbReference>
<dbReference type="HAMAP" id="MF_00457">
    <property type="entry name" value="UPF0173"/>
    <property type="match status" value="1"/>
</dbReference>
<dbReference type="InterPro" id="IPR001279">
    <property type="entry name" value="Metallo-B-lactamas"/>
</dbReference>
<dbReference type="InterPro" id="IPR036866">
    <property type="entry name" value="RibonucZ/Hydroxyglut_hydro"/>
</dbReference>
<dbReference type="InterPro" id="IPR022877">
    <property type="entry name" value="UPF0173"/>
</dbReference>
<dbReference type="InterPro" id="IPR050114">
    <property type="entry name" value="UPF0173_UPF0282_UlaG_hydrolase"/>
</dbReference>
<dbReference type="NCBIfam" id="NF001911">
    <property type="entry name" value="PRK00685.1"/>
    <property type="match status" value="1"/>
</dbReference>
<dbReference type="PANTHER" id="PTHR43546:SF3">
    <property type="entry name" value="UPF0173 METAL-DEPENDENT HYDROLASE MJ1163"/>
    <property type="match status" value="1"/>
</dbReference>
<dbReference type="PANTHER" id="PTHR43546">
    <property type="entry name" value="UPF0173 METAL-DEPENDENT HYDROLASE MJ1163-RELATED"/>
    <property type="match status" value="1"/>
</dbReference>
<dbReference type="Pfam" id="PF13483">
    <property type="entry name" value="Lactamase_B_3"/>
    <property type="match status" value="1"/>
</dbReference>
<dbReference type="SMART" id="SM00849">
    <property type="entry name" value="Lactamase_B"/>
    <property type="match status" value="1"/>
</dbReference>
<dbReference type="SUPFAM" id="SSF56281">
    <property type="entry name" value="Metallo-hydrolase/oxidoreductase"/>
    <property type="match status" value="1"/>
</dbReference>
<comment type="similarity">
    <text evidence="1">Belongs to the UPF0173 family.</text>
</comment>
<reference key="1">
    <citation type="submission" date="2006-06" db="EMBL/GenBank/DDBJ databases">
        <title>Complete sequence of chromosome of Mesorhizobium sp. BNC1.</title>
        <authorList>
            <consortium name="US DOE Joint Genome Institute"/>
            <person name="Copeland A."/>
            <person name="Lucas S."/>
            <person name="Lapidus A."/>
            <person name="Barry K."/>
            <person name="Detter J.C."/>
            <person name="Glavina del Rio T."/>
            <person name="Hammon N."/>
            <person name="Israni S."/>
            <person name="Dalin E."/>
            <person name="Tice H."/>
            <person name="Pitluck S."/>
            <person name="Chertkov O."/>
            <person name="Brettin T."/>
            <person name="Bruce D."/>
            <person name="Han C."/>
            <person name="Tapia R."/>
            <person name="Gilna P."/>
            <person name="Schmutz J."/>
            <person name="Larimer F."/>
            <person name="Land M."/>
            <person name="Hauser L."/>
            <person name="Kyrpides N."/>
            <person name="Mikhailova N."/>
            <person name="Richardson P."/>
        </authorList>
    </citation>
    <scope>NUCLEOTIDE SEQUENCE [LARGE SCALE GENOMIC DNA]</scope>
    <source>
        <strain>BNC1</strain>
    </source>
</reference>
<keyword id="KW-0378">Hydrolase</keyword>
<name>Y1362_CHESB</name>
<gene>
    <name type="ordered locus">Meso_1362</name>
</gene>
<feature type="chain" id="PRO_0000367189" description="UPF0173 metal-dependent hydrolase Meso_1362">
    <location>
        <begin position="1"/>
        <end position="234"/>
    </location>
</feature>
<accession>Q11IL7</accession>
<proteinExistence type="inferred from homology"/>
<sequence length="234" mass="25184">MKITWYGHSAFRIEAGGAKILIDPFLSGNPTWKEGWEGPAEGVTHVLLTHGHGDHLGDTLDILKKTGAMLVANAEISSYYGAQGVEGSRINPGNHGGTVDCGGFTTTFVNALHSSSFTKDGSNIYLGNPHGLVLHFPSDKTVYHMGDTDIFGDMALIEELHQPQIGLVPIGDRYTMGGAVAALACRRFFRFEAVIPCHYGTFPIIDQTAEKFIEGMEGAETKVLTPPPGQEVDL</sequence>
<organism>
    <name type="scientific">Chelativorans sp. (strain BNC1)</name>
    <dbReference type="NCBI Taxonomy" id="266779"/>
    <lineage>
        <taxon>Bacteria</taxon>
        <taxon>Pseudomonadati</taxon>
        <taxon>Pseudomonadota</taxon>
        <taxon>Alphaproteobacteria</taxon>
        <taxon>Hyphomicrobiales</taxon>
        <taxon>Phyllobacteriaceae</taxon>
        <taxon>Chelativorans</taxon>
    </lineage>
</organism>
<protein>
    <recommendedName>
        <fullName evidence="1">UPF0173 metal-dependent hydrolase Meso_1362</fullName>
    </recommendedName>
</protein>